<name>RL20_ACIBC</name>
<evidence type="ECO:0000255" key="1">
    <source>
        <dbReference type="HAMAP-Rule" id="MF_00382"/>
    </source>
</evidence>
<evidence type="ECO:0000305" key="2"/>
<feature type="chain" id="PRO_1000122257" description="Large ribosomal subunit protein bL20">
    <location>
        <begin position="1"/>
        <end position="119"/>
    </location>
</feature>
<gene>
    <name evidence="1" type="primary">rplT</name>
    <name type="ordered locus">ACICU_00601</name>
</gene>
<accession>B2HTH6</accession>
<organism>
    <name type="scientific">Acinetobacter baumannii (strain ACICU)</name>
    <dbReference type="NCBI Taxonomy" id="405416"/>
    <lineage>
        <taxon>Bacteria</taxon>
        <taxon>Pseudomonadati</taxon>
        <taxon>Pseudomonadota</taxon>
        <taxon>Gammaproteobacteria</taxon>
        <taxon>Moraxellales</taxon>
        <taxon>Moraxellaceae</taxon>
        <taxon>Acinetobacter</taxon>
        <taxon>Acinetobacter calcoaceticus/baumannii complex</taxon>
    </lineage>
</organism>
<proteinExistence type="inferred from homology"/>
<dbReference type="EMBL" id="CP000863">
    <property type="protein sequence ID" value="ACC55913.1"/>
    <property type="molecule type" value="Genomic_DNA"/>
</dbReference>
<dbReference type="RefSeq" id="WP_000124858.1">
    <property type="nucleotide sequence ID" value="NZ_CP031380.1"/>
</dbReference>
<dbReference type="SMR" id="B2HTH6"/>
<dbReference type="GeneID" id="9383733"/>
<dbReference type="KEGG" id="abc:ACICU_00601"/>
<dbReference type="HOGENOM" id="CLU_123265_0_1_6"/>
<dbReference type="Proteomes" id="UP000008839">
    <property type="component" value="Chromosome"/>
</dbReference>
<dbReference type="GO" id="GO:1990904">
    <property type="term" value="C:ribonucleoprotein complex"/>
    <property type="evidence" value="ECO:0007669"/>
    <property type="project" value="UniProtKB-KW"/>
</dbReference>
<dbReference type="GO" id="GO:0005840">
    <property type="term" value="C:ribosome"/>
    <property type="evidence" value="ECO:0007669"/>
    <property type="project" value="UniProtKB-KW"/>
</dbReference>
<dbReference type="GO" id="GO:0019843">
    <property type="term" value="F:rRNA binding"/>
    <property type="evidence" value="ECO:0007669"/>
    <property type="project" value="UniProtKB-UniRule"/>
</dbReference>
<dbReference type="GO" id="GO:0003735">
    <property type="term" value="F:structural constituent of ribosome"/>
    <property type="evidence" value="ECO:0007669"/>
    <property type="project" value="InterPro"/>
</dbReference>
<dbReference type="GO" id="GO:0000027">
    <property type="term" value="P:ribosomal large subunit assembly"/>
    <property type="evidence" value="ECO:0007669"/>
    <property type="project" value="UniProtKB-UniRule"/>
</dbReference>
<dbReference type="GO" id="GO:0006412">
    <property type="term" value="P:translation"/>
    <property type="evidence" value="ECO:0007669"/>
    <property type="project" value="InterPro"/>
</dbReference>
<dbReference type="CDD" id="cd07026">
    <property type="entry name" value="Ribosomal_L20"/>
    <property type="match status" value="1"/>
</dbReference>
<dbReference type="FunFam" id="1.10.1900.20:FF:000001">
    <property type="entry name" value="50S ribosomal protein L20"/>
    <property type="match status" value="1"/>
</dbReference>
<dbReference type="Gene3D" id="6.10.160.10">
    <property type="match status" value="1"/>
</dbReference>
<dbReference type="Gene3D" id="1.10.1900.20">
    <property type="entry name" value="Ribosomal protein L20"/>
    <property type="match status" value="1"/>
</dbReference>
<dbReference type="HAMAP" id="MF_00382">
    <property type="entry name" value="Ribosomal_bL20"/>
    <property type="match status" value="1"/>
</dbReference>
<dbReference type="InterPro" id="IPR005813">
    <property type="entry name" value="Ribosomal_bL20"/>
</dbReference>
<dbReference type="InterPro" id="IPR049946">
    <property type="entry name" value="RIBOSOMAL_L20_CS"/>
</dbReference>
<dbReference type="InterPro" id="IPR035566">
    <property type="entry name" value="Ribosomal_protein_bL20_C"/>
</dbReference>
<dbReference type="NCBIfam" id="TIGR01032">
    <property type="entry name" value="rplT_bact"/>
    <property type="match status" value="1"/>
</dbReference>
<dbReference type="PANTHER" id="PTHR10986">
    <property type="entry name" value="39S RIBOSOMAL PROTEIN L20"/>
    <property type="match status" value="1"/>
</dbReference>
<dbReference type="Pfam" id="PF00453">
    <property type="entry name" value="Ribosomal_L20"/>
    <property type="match status" value="1"/>
</dbReference>
<dbReference type="PRINTS" id="PR00062">
    <property type="entry name" value="RIBOSOMALL20"/>
</dbReference>
<dbReference type="SUPFAM" id="SSF74731">
    <property type="entry name" value="Ribosomal protein L20"/>
    <property type="match status" value="1"/>
</dbReference>
<dbReference type="PROSITE" id="PS00937">
    <property type="entry name" value="RIBOSOMAL_L20"/>
    <property type="match status" value="1"/>
</dbReference>
<sequence length="119" mass="13437">MARVKRGVVAHRRHKKILARAKGYYGARSRVYRVAFQAVIKAGQYAYRDRRQKKRQFRALWIARINAGARQNGLSYSRMIDGLKKAQVIIDRRVLADIAMHDAVAFAALAEKAKGALAA</sequence>
<keyword id="KW-0687">Ribonucleoprotein</keyword>
<keyword id="KW-0689">Ribosomal protein</keyword>
<keyword id="KW-0694">RNA-binding</keyword>
<keyword id="KW-0699">rRNA-binding</keyword>
<reference key="1">
    <citation type="journal article" date="2008" name="Antimicrob. Agents Chemother.">
        <title>Whole-genome pyrosequencing of an epidemic multidrug-resistant Acinetobacter baumannii strain belonging to the European clone II group.</title>
        <authorList>
            <person name="Iacono M."/>
            <person name="Villa L."/>
            <person name="Fortini D."/>
            <person name="Bordoni R."/>
            <person name="Imperi F."/>
            <person name="Bonnal R.J."/>
            <person name="Sicheritz-Ponten T."/>
            <person name="De Bellis G."/>
            <person name="Visca P."/>
            <person name="Cassone A."/>
            <person name="Carattoli A."/>
        </authorList>
    </citation>
    <scope>NUCLEOTIDE SEQUENCE [LARGE SCALE GENOMIC DNA]</scope>
    <source>
        <strain>ACICU</strain>
    </source>
</reference>
<comment type="function">
    <text evidence="1">Binds directly to 23S ribosomal RNA and is necessary for the in vitro assembly process of the 50S ribosomal subunit. It is not involved in the protein synthesizing functions of that subunit.</text>
</comment>
<comment type="similarity">
    <text evidence="1">Belongs to the bacterial ribosomal protein bL20 family.</text>
</comment>
<protein>
    <recommendedName>
        <fullName evidence="1">Large ribosomal subunit protein bL20</fullName>
    </recommendedName>
    <alternativeName>
        <fullName evidence="2">50S ribosomal protein L20</fullName>
    </alternativeName>
</protein>